<evidence type="ECO:0000255" key="1">
    <source>
        <dbReference type="HAMAP-Rule" id="MF_00258"/>
    </source>
</evidence>
<accession>A2C175</accession>
<keyword id="KW-0133">Cell shape</keyword>
<keyword id="KW-0961">Cell wall biogenesis/degradation</keyword>
<keyword id="KW-0413">Isomerase</keyword>
<keyword id="KW-0573">Peptidoglycan synthesis</keyword>
<sequence>MRIGLFDSGIGGFTVLKKVIELCPNNSFIYLADTARLPYGVKTNNEIKKIAEEISSWFRYQNIDAFLVACNTTNAIALDVIKNNLDIPVFDLIGSAASNIQESRVGVLATPSTVRTKAYTNAILEFKPKTFVIEQPCPAFVPMIEMDNINSDDITDVATGYLQPLLKQKIHSLILGCSHYPLITSSLRKVLPSSVKLIDPAEALSFKLKFFIDSKTRNYSKNKNFVDLKFYVTSNLKNFSNKAKHWLDVFPEVNLVSLQKKGWVS</sequence>
<dbReference type="EC" id="5.1.1.3" evidence="1"/>
<dbReference type="EMBL" id="CP000553">
    <property type="protein sequence ID" value="ABM75235.1"/>
    <property type="molecule type" value="Genomic_DNA"/>
</dbReference>
<dbReference type="RefSeq" id="WP_011823396.1">
    <property type="nucleotide sequence ID" value="NC_008819.1"/>
</dbReference>
<dbReference type="SMR" id="A2C175"/>
<dbReference type="KEGG" id="pme:NATL1_06751"/>
<dbReference type="eggNOG" id="COG0796">
    <property type="taxonomic scope" value="Bacteria"/>
</dbReference>
<dbReference type="HOGENOM" id="CLU_052344_0_2_3"/>
<dbReference type="UniPathway" id="UPA00219"/>
<dbReference type="Proteomes" id="UP000002592">
    <property type="component" value="Chromosome"/>
</dbReference>
<dbReference type="GO" id="GO:0008881">
    <property type="term" value="F:glutamate racemase activity"/>
    <property type="evidence" value="ECO:0007669"/>
    <property type="project" value="UniProtKB-UniRule"/>
</dbReference>
<dbReference type="GO" id="GO:0071555">
    <property type="term" value="P:cell wall organization"/>
    <property type="evidence" value="ECO:0007669"/>
    <property type="project" value="UniProtKB-KW"/>
</dbReference>
<dbReference type="GO" id="GO:0009252">
    <property type="term" value="P:peptidoglycan biosynthetic process"/>
    <property type="evidence" value="ECO:0007669"/>
    <property type="project" value="UniProtKB-UniRule"/>
</dbReference>
<dbReference type="GO" id="GO:0008360">
    <property type="term" value="P:regulation of cell shape"/>
    <property type="evidence" value="ECO:0007669"/>
    <property type="project" value="UniProtKB-KW"/>
</dbReference>
<dbReference type="FunFam" id="3.40.50.1860:FF:000001">
    <property type="entry name" value="Glutamate racemase"/>
    <property type="match status" value="1"/>
</dbReference>
<dbReference type="Gene3D" id="3.40.50.1860">
    <property type="match status" value="2"/>
</dbReference>
<dbReference type="HAMAP" id="MF_00258">
    <property type="entry name" value="Glu_racemase"/>
    <property type="match status" value="1"/>
</dbReference>
<dbReference type="InterPro" id="IPR015942">
    <property type="entry name" value="Asp/Glu/hydantoin_racemase"/>
</dbReference>
<dbReference type="InterPro" id="IPR001920">
    <property type="entry name" value="Asp/Glu_race"/>
</dbReference>
<dbReference type="InterPro" id="IPR004391">
    <property type="entry name" value="Glu_race"/>
</dbReference>
<dbReference type="NCBIfam" id="TIGR00067">
    <property type="entry name" value="glut_race"/>
    <property type="match status" value="1"/>
</dbReference>
<dbReference type="PANTHER" id="PTHR21198">
    <property type="entry name" value="GLUTAMATE RACEMASE"/>
    <property type="match status" value="1"/>
</dbReference>
<dbReference type="PANTHER" id="PTHR21198:SF2">
    <property type="entry name" value="GLUTAMATE RACEMASE"/>
    <property type="match status" value="1"/>
</dbReference>
<dbReference type="Pfam" id="PF01177">
    <property type="entry name" value="Asp_Glu_race"/>
    <property type="match status" value="1"/>
</dbReference>
<dbReference type="SUPFAM" id="SSF53681">
    <property type="entry name" value="Aspartate/glutamate racemase"/>
    <property type="match status" value="2"/>
</dbReference>
<gene>
    <name evidence="1" type="primary">murI</name>
    <name type="ordered locus">NATL1_06751</name>
</gene>
<reference key="1">
    <citation type="journal article" date="2007" name="PLoS Genet.">
        <title>Patterns and implications of gene gain and loss in the evolution of Prochlorococcus.</title>
        <authorList>
            <person name="Kettler G.C."/>
            <person name="Martiny A.C."/>
            <person name="Huang K."/>
            <person name="Zucker J."/>
            <person name="Coleman M.L."/>
            <person name="Rodrigue S."/>
            <person name="Chen F."/>
            <person name="Lapidus A."/>
            <person name="Ferriera S."/>
            <person name="Johnson J."/>
            <person name="Steglich C."/>
            <person name="Church G.M."/>
            <person name="Richardson P."/>
            <person name="Chisholm S.W."/>
        </authorList>
    </citation>
    <scope>NUCLEOTIDE SEQUENCE [LARGE SCALE GENOMIC DNA]</scope>
    <source>
        <strain>NATL1A</strain>
    </source>
</reference>
<feature type="chain" id="PRO_1000059071" description="Glutamate racemase">
    <location>
        <begin position="1"/>
        <end position="265"/>
    </location>
</feature>
<feature type="active site" description="Proton donor/acceptor" evidence="1">
    <location>
        <position position="70"/>
    </location>
</feature>
<feature type="active site" description="Proton donor/acceptor" evidence="1">
    <location>
        <position position="177"/>
    </location>
</feature>
<feature type="binding site" evidence="1">
    <location>
        <begin position="7"/>
        <end position="8"/>
    </location>
    <ligand>
        <name>substrate</name>
    </ligand>
</feature>
<feature type="binding site" evidence="1">
    <location>
        <begin position="39"/>
        <end position="40"/>
    </location>
    <ligand>
        <name>substrate</name>
    </ligand>
</feature>
<feature type="binding site" evidence="1">
    <location>
        <begin position="71"/>
        <end position="72"/>
    </location>
    <ligand>
        <name>substrate</name>
    </ligand>
</feature>
<comment type="function">
    <text evidence="1">Provides the (R)-glutamate required for cell wall biosynthesis.</text>
</comment>
<comment type="catalytic activity">
    <reaction evidence="1">
        <text>L-glutamate = D-glutamate</text>
        <dbReference type="Rhea" id="RHEA:12813"/>
        <dbReference type="ChEBI" id="CHEBI:29985"/>
        <dbReference type="ChEBI" id="CHEBI:29986"/>
        <dbReference type="EC" id="5.1.1.3"/>
    </reaction>
</comment>
<comment type="pathway">
    <text evidence="1">Cell wall biogenesis; peptidoglycan biosynthesis.</text>
</comment>
<comment type="similarity">
    <text evidence="1">Belongs to the aspartate/glutamate racemases family.</text>
</comment>
<organism>
    <name type="scientific">Prochlorococcus marinus (strain NATL1A)</name>
    <dbReference type="NCBI Taxonomy" id="167555"/>
    <lineage>
        <taxon>Bacteria</taxon>
        <taxon>Bacillati</taxon>
        <taxon>Cyanobacteriota</taxon>
        <taxon>Cyanophyceae</taxon>
        <taxon>Synechococcales</taxon>
        <taxon>Prochlorococcaceae</taxon>
        <taxon>Prochlorococcus</taxon>
    </lineage>
</organism>
<proteinExistence type="inferred from homology"/>
<protein>
    <recommendedName>
        <fullName evidence="1">Glutamate racemase</fullName>
        <ecNumber evidence="1">5.1.1.3</ecNumber>
    </recommendedName>
</protein>
<name>MURI_PROM1</name>